<feature type="chain" id="PRO_0000322645" description="EH domain-containing protein 3">
    <location>
        <begin position="1"/>
        <end position="535"/>
    </location>
</feature>
<feature type="domain" description="Dynamin-type G" evidence="8">
    <location>
        <begin position="55"/>
        <end position="286"/>
    </location>
</feature>
<feature type="domain" description="EH" evidence="6">
    <location>
        <begin position="444"/>
        <end position="532"/>
    </location>
</feature>
<feature type="domain" description="EF-hand" evidence="7">
    <location>
        <begin position="476"/>
        <end position="511"/>
    </location>
</feature>
<feature type="region of interest" description="G1 motif" evidence="8">
    <location>
        <begin position="65"/>
        <end position="72"/>
    </location>
</feature>
<feature type="region of interest" description="G2 motif" evidence="8">
    <location>
        <begin position="91"/>
        <end position="92"/>
    </location>
</feature>
<feature type="region of interest" description="G3 motif" evidence="8">
    <location>
        <begin position="153"/>
        <end position="156"/>
    </location>
</feature>
<feature type="region of interest" description="G4 motif" evidence="8">
    <location>
        <begin position="219"/>
        <end position="222"/>
    </location>
</feature>
<feature type="region of interest" description="G5 motif" evidence="8">
    <location>
        <position position="243"/>
    </location>
</feature>
<feature type="coiled-coil region" evidence="5">
    <location>
        <begin position="198"/>
        <end position="227"/>
    </location>
</feature>
<feature type="binding site" evidence="2">
    <location>
        <begin position="65"/>
        <end position="72"/>
    </location>
    <ligand>
        <name>ATP</name>
        <dbReference type="ChEBI" id="CHEBI:30616"/>
    </ligand>
</feature>
<feature type="binding site" evidence="1">
    <location>
        <position position="220"/>
    </location>
    <ligand>
        <name>ATP</name>
        <dbReference type="ChEBI" id="CHEBI:30616"/>
    </ligand>
</feature>
<feature type="binding site" evidence="1">
    <location>
        <position position="258"/>
    </location>
    <ligand>
        <name>ATP</name>
        <dbReference type="ChEBI" id="CHEBI:30616"/>
    </ligand>
</feature>
<feature type="binding site" evidence="7">
    <location>
        <position position="489"/>
    </location>
    <ligand>
        <name>Ca(2+)</name>
        <dbReference type="ChEBI" id="CHEBI:29108"/>
    </ligand>
</feature>
<feature type="binding site" evidence="7">
    <location>
        <position position="491"/>
    </location>
    <ligand>
        <name>Ca(2+)</name>
        <dbReference type="ChEBI" id="CHEBI:29108"/>
    </ligand>
</feature>
<feature type="binding site" evidence="7">
    <location>
        <position position="493"/>
    </location>
    <ligand>
        <name>Ca(2+)</name>
        <dbReference type="ChEBI" id="CHEBI:29108"/>
    </ligand>
</feature>
<feature type="binding site" evidence="7">
    <location>
        <position position="495"/>
    </location>
    <ligand>
        <name>Ca(2+)</name>
        <dbReference type="ChEBI" id="CHEBI:29108"/>
    </ligand>
</feature>
<feature type="binding site" evidence="7">
    <location>
        <position position="500"/>
    </location>
    <ligand>
        <name>Ca(2+)</name>
        <dbReference type="ChEBI" id="CHEBI:29108"/>
    </ligand>
</feature>
<feature type="modified residue" description="N-acetylmethionine" evidence="2">
    <location>
        <position position="1"/>
    </location>
</feature>
<feature type="modified residue" description="Phosphoserine" evidence="12">
    <location>
        <position position="349"/>
    </location>
</feature>
<feature type="modified residue" description="Phosphoserine" evidence="12">
    <location>
        <position position="456"/>
    </location>
</feature>
<feature type="cross-link" description="Glycyl lysine isopeptide (Lys-Gly) (interchain with G-Cter in SUMO)" evidence="2">
    <location>
        <position position="315"/>
    </location>
</feature>
<feature type="cross-link" description="Glycyl lysine isopeptide (Lys-Gly) (interchain with G-Cter in SUMO)" evidence="2">
    <location>
        <position position="511"/>
    </location>
</feature>
<name>EHD3_RAT</name>
<proteinExistence type="evidence at protein level"/>
<protein>
    <recommendedName>
        <fullName evidence="10">EH domain-containing protein 3</fullName>
    </recommendedName>
</protein>
<accession>Q8R491</accession>
<gene>
    <name evidence="11" type="primary">Ehd3</name>
    <name type="synonym">Ehd2</name>
</gene>
<sequence length="535" mass="60791">MFSWLGNDDRRKKDPEVFQTVSEGLKKLYKTKLLPLEEYYRFHEFHSPALEDADFDNKPMVLLVGQYSTGKTTFIRYLLEQDFPGMRIGPEPTTDSFIAVMQGDVEGIIPGNALVVDPKKPFRKLNAFGNAFLNRFVCAQLPNAVLESISVIDTPGILSGEKQRISRGYDFAAVLEWFAERVDRIILLFDAHKLDISDEFSEVIKALKNHEDKMRVVLNKADQIETQQLMRVYGALMWSLGKIVNTPEVIRVYIGSFWSHPLLIPDNRKLFEAEEQDLFKDIQSLPRNAALRKLNDLIKRARLAKVHAYIISSLKKEMPSVFGKDTKKKELVNNLAEIYGRIEREHQISPGDFPNLKRMQDQLQAQDFSKFQPLKSKLLEVVDDMLAHDIAQLMVLVRQEETQRPVQMVKGGAFEGTLQGPFGHGYGEGAGEGIDDAEWVVARDKPMYDEIFYTLSPVDGKITGANAKKEMVRSKLPNSVLGKIWKLADIDKDGMLDDEEFALANHLIKVKLEGHELPSELPAHLLPPSKRKVAE</sequence>
<keyword id="KW-0007">Acetylation</keyword>
<keyword id="KW-0067">ATP-binding</keyword>
<keyword id="KW-0106">Calcium</keyword>
<keyword id="KW-1003">Cell membrane</keyword>
<keyword id="KW-0966">Cell projection</keyword>
<keyword id="KW-0969">Cilium</keyword>
<keyword id="KW-0970">Cilium biogenesis/degradation</keyword>
<keyword id="KW-0175">Coiled coil</keyword>
<keyword id="KW-0967">Endosome</keyword>
<keyword id="KW-1017">Isopeptide bond</keyword>
<keyword id="KW-0472">Membrane</keyword>
<keyword id="KW-0479">Metal-binding</keyword>
<keyword id="KW-0547">Nucleotide-binding</keyword>
<keyword id="KW-0597">Phosphoprotein</keyword>
<keyword id="KW-0653">Protein transport</keyword>
<keyword id="KW-1185">Reference proteome</keyword>
<keyword id="KW-0813">Transport</keyword>
<keyword id="KW-0832">Ubl conjugation</keyword>
<reference key="1">
    <citation type="submission" date="2003-09" db="EMBL/GenBank/DDBJ databases">
        <authorList>
            <person name="Park S.Y."/>
            <person name="Lee W."/>
        </authorList>
    </citation>
    <scope>NUCLEOTIDE SEQUENCE [MRNA]</scope>
    <source>
        <strain>Sprague-Dawley</strain>
        <tissue>Adipose tissue</tissue>
    </source>
</reference>
<reference key="2">
    <citation type="journal article" date="2005" name="Mol. Biol. Cell">
        <title>EHD proteins associate with syndapin I and II and such interactions play a crucial role in endosomal recycling.</title>
        <authorList>
            <person name="Braun A."/>
            <person name="Pinyol R."/>
            <person name="Dahlhaus R."/>
            <person name="Koch D."/>
            <person name="Fonarev P."/>
            <person name="Grant B.D."/>
            <person name="Kessels M.M."/>
            <person name="Qualmann B."/>
        </authorList>
    </citation>
    <scope>INTERACTION WITH PACSIN1</scope>
</reference>
<reference key="3">
    <citation type="journal article" date="2012" name="Nat. Commun.">
        <title>Quantitative maps of protein phosphorylation sites across 14 different rat organs and tissues.</title>
        <authorList>
            <person name="Lundby A."/>
            <person name="Secher A."/>
            <person name="Lage K."/>
            <person name="Nordsborg N.B."/>
            <person name="Dmytriyev A."/>
            <person name="Lundby C."/>
            <person name="Olsen J.V."/>
        </authorList>
    </citation>
    <scope>PHOSPHORYLATION [LARGE SCALE ANALYSIS] AT SER-349 AND SER-456</scope>
    <scope>IDENTIFICATION BY MASS SPECTROMETRY [LARGE SCALE ANALYSIS]</scope>
</reference>
<dbReference type="EMBL" id="AF494093">
    <property type="protein sequence ID" value="AAM14604.2"/>
    <property type="molecule type" value="mRNA"/>
</dbReference>
<dbReference type="RefSeq" id="NP_620245.2">
    <property type="nucleotide sequence ID" value="NM_138890.2"/>
</dbReference>
<dbReference type="BMRB" id="Q8R491"/>
<dbReference type="SMR" id="Q8R491"/>
<dbReference type="BioGRID" id="251376">
    <property type="interactions" value="1"/>
</dbReference>
<dbReference type="FunCoup" id="Q8R491">
    <property type="interactions" value="2185"/>
</dbReference>
<dbReference type="IntAct" id="Q8R491">
    <property type="interactions" value="2"/>
</dbReference>
<dbReference type="MINT" id="Q8R491"/>
<dbReference type="STRING" id="10116.ENSRNOP00000068716"/>
<dbReference type="iPTMnet" id="Q8R491"/>
<dbReference type="PhosphoSitePlus" id="Q8R491"/>
<dbReference type="SwissPalm" id="Q8R491"/>
<dbReference type="jPOST" id="Q8R491"/>
<dbReference type="PaxDb" id="10116-ENSRNOP00000010419"/>
<dbReference type="Ensembl" id="ENSRNOT00000010419.4">
    <property type="protein sequence ID" value="ENSRNOP00000010419.3"/>
    <property type="gene ID" value="ENSRNOG00000007744.5"/>
</dbReference>
<dbReference type="GeneID" id="192249"/>
<dbReference type="KEGG" id="rno:192249"/>
<dbReference type="UCSC" id="RGD:621762">
    <property type="organism name" value="rat"/>
</dbReference>
<dbReference type="AGR" id="RGD:621762"/>
<dbReference type="CTD" id="30845"/>
<dbReference type="RGD" id="621762">
    <property type="gene designation" value="Ehd3"/>
</dbReference>
<dbReference type="eggNOG" id="KOG1954">
    <property type="taxonomic scope" value="Eukaryota"/>
</dbReference>
<dbReference type="GeneTree" id="ENSGT00940000159274"/>
<dbReference type="HOGENOM" id="CLU_017595_1_1_1"/>
<dbReference type="InParanoid" id="Q8R491"/>
<dbReference type="OrthoDB" id="31592at9989"/>
<dbReference type="PhylomeDB" id="Q8R491"/>
<dbReference type="TreeFam" id="TF314429"/>
<dbReference type="Reactome" id="R-RNO-983231">
    <property type="pathway name" value="Factors involved in megakaryocyte development and platelet production"/>
</dbReference>
<dbReference type="PRO" id="PR:Q8R491"/>
<dbReference type="Proteomes" id="UP000002494">
    <property type="component" value="Chromosome 6"/>
</dbReference>
<dbReference type="Bgee" id="ENSRNOG00000007744">
    <property type="expression patterns" value="Expressed in frontal cortex and 19 other cell types or tissues"/>
</dbReference>
<dbReference type="ExpressionAtlas" id="Q8R491">
    <property type="expression patterns" value="baseline and differential"/>
</dbReference>
<dbReference type="GO" id="GO:0020018">
    <property type="term" value="C:ciliary pocket membrane"/>
    <property type="evidence" value="ECO:0000250"/>
    <property type="project" value="UniProtKB"/>
</dbReference>
<dbReference type="GO" id="GO:0005737">
    <property type="term" value="C:cytoplasm"/>
    <property type="evidence" value="ECO:0000250"/>
    <property type="project" value="UniProtKB"/>
</dbReference>
<dbReference type="GO" id="GO:0005829">
    <property type="term" value="C:cytosol"/>
    <property type="evidence" value="ECO:0007669"/>
    <property type="project" value="GOC"/>
</dbReference>
<dbReference type="GO" id="GO:0005769">
    <property type="term" value="C:early endosome"/>
    <property type="evidence" value="ECO:0000318"/>
    <property type="project" value="GO_Central"/>
</dbReference>
<dbReference type="GO" id="GO:0030139">
    <property type="term" value="C:endocytic vesicle"/>
    <property type="evidence" value="ECO:0000266"/>
    <property type="project" value="RGD"/>
</dbReference>
<dbReference type="GO" id="GO:0048471">
    <property type="term" value="C:perinuclear region of cytoplasm"/>
    <property type="evidence" value="ECO:0000266"/>
    <property type="project" value="RGD"/>
</dbReference>
<dbReference type="GO" id="GO:0005886">
    <property type="term" value="C:plasma membrane"/>
    <property type="evidence" value="ECO:0000318"/>
    <property type="project" value="GO_Central"/>
</dbReference>
<dbReference type="GO" id="GO:0055038">
    <property type="term" value="C:recycling endosome membrane"/>
    <property type="evidence" value="ECO:0000250"/>
    <property type="project" value="UniProtKB"/>
</dbReference>
<dbReference type="GO" id="GO:0005524">
    <property type="term" value="F:ATP binding"/>
    <property type="evidence" value="ECO:0007669"/>
    <property type="project" value="UniProtKB-KW"/>
</dbReference>
<dbReference type="GO" id="GO:0005509">
    <property type="term" value="F:calcium ion binding"/>
    <property type="evidence" value="ECO:0007669"/>
    <property type="project" value="InterPro"/>
</dbReference>
<dbReference type="GO" id="GO:0005525">
    <property type="term" value="F:GTP binding"/>
    <property type="evidence" value="ECO:0007669"/>
    <property type="project" value="InterPro"/>
</dbReference>
<dbReference type="GO" id="GO:0060271">
    <property type="term" value="P:cilium assembly"/>
    <property type="evidence" value="ECO:0000250"/>
    <property type="project" value="UniProtKB"/>
</dbReference>
<dbReference type="GO" id="GO:0034498">
    <property type="term" value="P:early endosome to Golgi transport"/>
    <property type="evidence" value="ECO:0000266"/>
    <property type="project" value="RGD"/>
</dbReference>
<dbReference type="GO" id="GO:0032456">
    <property type="term" value="P:endocytic recycling"/>
    <property type="evidence" value="ECO:0000250"/>
    <property type="project" value="UniProtKB"/>
</dbReference>
<dbReference type="GO" id="GO:0006897">
    <property type="term" value="P:endocytosis"/>
    <property type="evidence" value="ECO:0000318"/>
    <property type="project" value="GO_Central"/>
</dbReference>
<dbReference type="GO" id="GO:0090160">
    <property type="term" value="P:Golgi to lysosome transport"/>
    <property type="evidence" value="ECO:0000266"/>
    <property type="project" value="RGD"/>
</dbReference>
<dbReference type="GO" id="GO:0051260">
    <property type="term" value="P:protein homooligomerization"/>
    <property type="evidence" value="ECO:0000250"/>
    <property type="project" value="UniProtKB"/>
</dbReference>
<dbReference type="GO" id="GO:0072659">
    <property type="term" value="P:protein localization to plasma membrane"/>
    <property type="evidence" value="ECO:0000266"/>
    <property type="project" value="RGD"/>
</dbReference>
<dbReference type="GO" id="GO:0015031">
    <property type="term" value="P:protein transport"/>
    <property type="evidence" value="ECO:0007669"/>
    <property type="project" value="UniProtKB-KW"/>
</dbReference>
<dbReference type="GO" id="GO:0001881">
    <property type="term" value="P:receptor recycling"/>
    <property type="evidence" value="ECO:0000266"/>
    <property type="project" value="RGD"/>
</dbReference>
<dbReference type="GO" id="GO:1903779">
    <property type="term" value="P:regulation of cardiac conduction"/>
    <property type="evidence" value="ECO:0000266"/>
    <property type="project" value="RGD"/>
</dbReference>
<dbReference type="GO" id="GO:0086036">
    <property type="term" value="P:regulation of cardiac muscle cell membrane potential"/>
    <property type="evidence" value="ECO:0000266"/>
    <property type="project" value="RGD"/>
</dbReference>
<dbReference type="GO" id="GO:0055117">
    <property type="term" value="P:regulation of cardiac muscle contraction"/>
    <property type="evidence" value="ECO:0000266"/>
    <property type="project" value="RGD"/>
</dbReference>
<dbReference type="GO" id="GO:1903358">
    <property type="term" value="P:regulation of Golgi organization"/>
    <property type="evidence" value="ECO:0000266"/>
    <property type="project" value="RGD"/>
</dbReference>
<dbReference type="CDD" id="cd00052">
    <property type="entry name" value="EH"/>
    <property type="match status" value="1"/>
</dbReference>
<dbReference type="CDD" id="cd09913">
    <property type="entry name" value="EHD"/>
    <property type="match status" value="1"/>
</dbReference>
<dbReference type="FunFam" id="3.40.50.300:FF:000147">
    <property type="entry name" value="EH domain-containing protein 1"/>
    <property type="match status" value="1"/>
</dbReference>
<dbReference type="FunFam" id="1.10.238.10:FF:000038">
    <property type="entry name" value="EH domain-containing protein 3"/>
    <property type="match status" value="1"/>
</dbReference>
<dbReference type="Gene3D" id="1.10.268.20">
    <property type="match status" value="1"/>
</dbReference>
<dbReference type="Gene3D" id="1.10.238.10">
    <property type="entry name" value="EF-hand"/>
    <property type="match status" value="1"/>
</dbReference>
<dbReference type="Gene3D" id="3.40.50.300">
    <property type="entry name" value="P-loop containing nucleotide triphosphate hydrolases"/>
    <property type="match status" value="1"/>
</dbReference>
<dbReference type="InterPro" id="IPR040990">
    <property type="entry name" value="DUF5600"/>
</dbReference>
<dbReference type="InterPro" id="IPR045063">
    <property type="entry name" value="Dynamin_N"/>
</dbReference>
<dbReference type="InterPro" id="IPR011992">
    <property type="entry name" value="EF-hand-dom_pair"/>
</dbReference>
<dbReference type="InterPro" id="IPR018247">
    <property type="entry name" value="EF_Hand_1_Ca_BS"/>
</dbReference>
<dbReference type="InterPro" id="IPR002048">
    <property type="entry name" value="EF_hand_dom"/>
</dbReference>
<dbReference type="InterPro" id="IPR000261">
    <property type="entry name" value="EH_dom"/>
</dbReference>
<dbReference type="InterPro" id="IPR031692">
    <property type="entry name" value="EHD_N"/>
</dbReference>
<dbReference type="InterPro" id="IPR030381">
    <property type="entry name" value="G_DYNAMIN_dom"/>
</dbReference>
<dbReference type="InterPro" id="IPR027417">
    <property type="entry name" value="P-loop_NTPase"/>
</dbReference>
<dbReference type="PANTHER" id="PTHR11216:SF170">
    <property type="entry name" value="DYNAMIN ASSOCIATED PROTEIN 160, ISOFORM D"/>
    <property type="match status" value="1"/>
</dbReference>
<dbReference type="PANTHER" id="PTHR11216">
    <property type="entry name" value="EH DOMAIN"/>
    <property type="match status" value="1"/>
</dbReference>
<dbReference type="Pfam" id="PF18150">
    <property type="entry name" value="DUF5600"/>
    <property type="match status" value="1"/>
</dbReference>
<dbReference type="Pfam" id="PF00350">
    <property type="entry name" value="Dynamin_N"/>
    <property type="match status" value="1"/>
</dbReference>
<dbReference type="Pfam" id="PF12763">
    <property type="entry name" value="EH"/>
    <property type="match status" value="1"/>
</dbReference>
<dbReference type="Pfam" id="PF16880">
    <property type="entry name" value="EHD_N"/>
    <property type="match status" value="1"/>
</dbReference>
<dbReference type="SMART" id="SM00027">
    <property type="entry name" value="EH"/>
    <property type="match status" value="1"/>
</dbReference>
<dbReference type="SUPFAM" id="SSF47473">
    <property type="entry name" value="EF-hand"/>
    <property type="match status" value="1"/>
</dbReference>
<dbReference type="SUPFAM" id="SSF52540">
    <property type="entry name" value="P-loop containing nucleoside triphosphate hydrolases"/>
    <property type="match status" value="1"/>
</dbReference>
<dbReference type="PROSITE" id="PS00018">
    <property type="entry name" value="EF_HAND_1"/>
    <property type="match status" value="1"/>
</dbReference>
<dbReference type="PROSITE" id="PS50222">
    <property type="entry name" value="EF_HAND_2"/>
    <property type="match status" value="1"/>
</dbReference>
<dbReference type="PROSITE" id="PS50031">
    <property type="entry name" value="EH"/>
    <property type="match status" value="1"/>
</dbReference>
<dbReference type="PROSITE" id="PS51718">
    <property type="entry name" value="G_DYNAMIN_2"/>
    <property type="match status" value="1"/>
</dbReference>
<organism>
    <name type="scientific">Rattus norvegicus</name>
    <name type="common">Rat</name>
    <dbReference type="NCBI Taxonomy" id="10116"/>
    <lineage>
        <taxon>Eukaryota</taxon>
        <taxon>Metazoa</taxon>
        <taxon>Chordata</taxon>
        <taxon>Craniata</taxon>
        <taxon>Vertebrata</taxon>
        <taxon>Euteleostomi</taxon>
        <taxon>Mammalia</taxon>
        <taxon>Eutheria</taxon>
        <taxon>Euarchontoglires</taxon>
        <taxon>Glires</taxon>
        <taxon>Rodentia</taxon>
        <taxon>Myomorpha</taxon>
        <taxon>Muroidea</taxon>
        <taxon>Muridae</taxon>
        <taxon>Murinae</taxon>
        <taxon>Rattus</taxon>
    </lineage>
</organism>
<evidence type="ECO:0000250" key="1">
    <source>
        <dbReference type="UniProtKB" id="Q8BH64"/>
    </source>
</evidence>
<evidence type="ECO:0000250" key="2">
    <source>
        <dbReference type="UniProtKB" id="Q9NZN3"/>
    </source>
</evidence>
<evidence type="ECO:0000250" key="3">
    <source>
        <dbReference type="UniProtKB" id="Q9QXY6"/>
    </source>
</evidence>
<evidence type="ECO:0000250" key="4">
    <source>
        <dbReference type="UniProtKB" id="Q9WVK4"/>
    </source>
</evidence>
<evidence type="ECO:0000255" key="5"/>
<evidence type="ECO:0000255" key="6">
    <source>
        <dbReference type="PROSITE-ProRule" id="PRU00077"/>
    </source>
</evidence>
<evidence type="ECO:0000255" key="7">
    <source>
        <dbReference type="PROSITE-ProRule" id="PRU00448"/>
    </source>
</evidence>
<evidence type="ECO:0000255" key="8">
    <source>
        <dbReference type="PROSITE-ProRule" id="PRU01055"/>
    </source>
</evidence>
<evidence type="ECO:0000269" key="9">
    <source>
    </source>
</evidence>
<evidence type="ECO:0000305" key="10"/>
<evidence type="ECO:0000312" key="11">
    <source>
        <dbReference type="RGD" id="621762"/>
    </source>
</evidence>
<evidence type="ECO:0007744" key="12">
    <source>
    </source>
</evidence>
<comment type="function">
    <text evidence="2 3">ATP- and membrane-binding protein that controls membrane reorganization/tubulation upon ATP hydrolysis. In vitro causes tubulation of endocytic membranes. Binding to phosphatidic acid induces its membrane tubulation activity. Plays a role in endocytic transport. Involved in early endosome to recycling endosome compartment (ERC), retrograde early endosome to Golgi, and endosome to plasma membrane (rapid recycling) protein transport. Involved in the regulation of Golgi maintenance and morphology. Involved in the recycling of internalized D1 dopamine receptor (By similarity). Plays a role in cardiac protein trafficking probably implicating ANK2. Involved in the ventricular membrane targeting of SLC8A1 and CACNA1C and probably the atrial membrane localization of CACNA1GG and CACNA1H implicated in the regulation of atrial myocyte excitability and cardiac conduction. In conjunction with EHD4 may be involved in endocytic trafficking of KDR/VEGFR2 implicated in control of glomerular function. Involved in the rapid recycling of integrin beta-3 implicated in cell adhesion maintenance. Involved in the unidirectional retrograde dendritic transport of endocytosed BACE1 and in efficient sorting of BACE1 to axons implicating a function in neuronal APP processing. Plays a role in the formation of the ciliary vesicle, an early step in cilium biogenesis; possibly sharing redundant functions with Ehd1.</text>
</comment>
<comment type="subunit">
    <text evidence="2 3 9">Homooligomer, and heterooligomer with EHD1, EHD2 and EHD4, ATP-binding is required for heterooligomerization (By similarity). Interacts with PACSIN1 (By similarity). Interacts with PACSIN2 (PubMed:15930129). Interacts (via EH domain) with MICALL1. Interacts (via EH domain) with RAB11FIP2 (By similarity). Interacts with ANK2 (By similarity). Interacts with CACNA1GG and CACNA1H (By similarity).</text>
</comment>
<comment type="subcellular location">
    <subcellularLocation>
        <location evidence="2">Recycling endosome membrane</location>
        <topology evidence="10">Peripheral membrane protein</topology>
        <orientation evidence="10">Cytoplasmic side</orientation>
    </subcellularLocation>
    <subcellularLocation>
        <location evidence="2">Cell membrane</location>
        <topology evidence="10">Peripheral membrane protein</topology>
        <orientation evidence="10">Cytoplasmic side</orientation>
    </subcellularLocation>
    <subcellularLocation>
        <location evidence="2">Cell projection</location>
        <location evidence="2">Cilium membrane</location>
        <topology evidence="10">Peripheral membrane protein</topology>
        <orientation evidence="10">Cytoplasmic side</orientation>
    </subcellularLocation>
    <text evidence="2 3">Localizes to the ciliary pocket from where the cilium protrudes. Colocalizes with RAB8A and MYO5B to a cytoplasmic tubular network devoid of RAB11A. Colocalizes with ANK2 in myocyte perinuclear region. Colocalizes with BACE1 in tubulovesicular cytoplasmic membranes. Colocalizes with BACE1 and APP amyloid beta proteins in hippocampal mossy fiber terminals.</text>
</comment>
<comment type="domain">
    <text evidence="4">The EH domain interacts with Asn-Pro-Phe (NPF) motifs of target proteins.</text>
</comment>
<comment type="similarity">
    <text evidence="8">Belongs to the TRAFAC class dynamin-like GTPase superfamily. Dynamin/Fzo/YdjA family. EHD subfamily.</text>
</comment>